<organism>
    <name type="scientific">Ureaplasma urealyticum serovar 10 (strain ATCC 33699 / Western)</name>
    <dbReference type="NCBI Taxonomy" id="565575"/>
    <lineage>
        <taxon>Bacteria</taxon>
        <taxon>Bacillati</taxon>
        <taxon>Mycoplasmatota</taxon>
        <taxon>Mycoplasmoidales</taxon>
        <taxon>Mycoplasmoidaceae</taxon>
        <taxon>Ureaplasma</taxon>
    </lineage>
</organism>
<dbReference type="EMBL" id="CP001184">
    <property type="protein sequence ID" value="ACI60200.1"/>
    <property type="molecule type" value="Genomic_DNA"/>
</dbReference>
<dbReference type="RefSeq" id="WP_012560312.1">
    <property type="nucleotide sequence ID" value="NC_011374.1"/>
</dbReference>
<dbReference type="SMR" id="B5ZC22"/>
<dbReference type="STRING" id="565575.UUR10_0597"/>
<dbReference type="KEGG" id="uue:UUR10_0597"/>
<dbReference type="eggNOG" id="COG0264">
    <property type="taxonomic scope" value="Bacteria"/>
</dbReference>
<dbReference type="HOGENOM" id="CLU_047155_0_2_14"/>
<dbReference type="OrthoDB" id="9808348at2"/>
<dbReference type="Proteomes" id="UP000002018">
    <property type="component" value="Chromosome"/>
</dbReference>
<dbReference type="GO" id="GO:0005737">
    <property type="term" value="C:cytoplasm"/>
    <property type="evidence" value="ECO:0007669"/>
    <property type="project" value="UniProtKB-SubCell"/>
</dbReference>
<dbReference type="GO" id="GO:0003746">
    <property type="term" value="F:translation elongation factor activity"/>
    <property type="evidence" value="ECO:0007669"/>
    <property type="project" value="UniProtKB-UniRule"/>
</dbReference>
<dbReference type="CDD" id="cd14275">
    <property type="entry name" value="UBA_EF-Ts"/>
    <property type="match status" value="1"/>
</dbReference>
<dbReference type="FunFam" id="1.10.286.20:FF:000001">
    <property type="entry name" value="Elongation factor Ts"/>
    <property type="match status" value="1"/>
</dbReference>
<dbReference type="FunFam" id="1.10.8.10:FF:000001">
    <property type="entry name" value="Elongation factor Ts"/>
    <property type="match status" value="1"/>
</dbReference>
<dbReference type="Gene3D" id="1.10.286.20">
    <property type="match status" value="1"/>
</dbReference>
<dbReference type="Gene3D" id="1.10.8.10">
    <property type="entry name" value="DNA helicase RuvA subunit, C-terminal domain"/>
    <property type="match status" value="1"/>
</dbReference>
<dbReference type="Gene3D" id="3.30.479.20">
    <property type="entry name" value="Elongation factor Ts, dimerisation domain"/>
    <property type="match status" value="2"/>
</dbReference>
<dbReference type="HAMAP" id="MF_00050">
    <property type="entry name" value="EF_Ts"/>
    <property type="match status" value="1"/>
</dbReference>
<dbReference type="InterPro" id="IPR036402">
    <property type="entry name" value="EF-Ts_dimer_sf"/>
</dbReference>
<dbReference type="InterPro" id="IPR001816">
    <property type="entry name" value="Transl_elong_EFTs/EF1B"/>
</dbReference>
<dbReference type="InterPro" id="IPR014039">
    <property type="entry name" value="Transl_elong_EFTs/EF1B_dimer"/>
</dbReference>
<dbReference type="InterPro" id="IPR018101">
    <property type="entry name" value="Transl_elong_Ts_CS"/>
</dbReference>
<dbReference type="InterPro" id="IPR009060">
    <property type="entry name" value="UBA-like_sf"/>
</dbReference>
<dbReference type="NCBIfam" id="TIGR00116">
    <property type="entry name" value="tsf"/>
    <property type="match status" value="1"/>
</dbReference>
<dbReference type="PANTHER" id="PTHR11741">
    <property type="entry name" value="ELONGATION FACTOR TS"/>
    <property type="match status" value="1"/>
</dbReference>
<dbReference type="PANTHER" id="PTHR11741:SF0">
    <property type="entry name" value="ELONGATION FACTOR TS, MITOCHONDRIAL"/>
    <property type="match status" value="1"/>
</dbReference>
<dbReference type="Pfam" id="PF00889">
    <property type="entry name" value="EF_TS"/>
    <property type="match status" value="1"/>
</dbReference>
<dbReference type="SUPFAM" id="SSF54713">
    <property type="entry name" value="Elongation factor Ts (EF-Ts), dimerisation domain"/>
    <property type="match status" value="2"/>
</dbReference>
<dbReference type="SUPFAM" id="SSF46934">
    <property type="entry name" value="UBA-like"/>
    <property type="match status" value="1"/>
</dbReference>
<dbReference type="PROSITE" id="PS01127">
    <property type="entry name" value="EF_TS_2"/>
    <property type="match status" value="1"/>
</dbReference>
<feature type="chain" id="PRO_1000189899" description="Elongation factor Ts">
    <location>
        <begin position="1"/>
        <end position="291"/>
    </location>
</feature>
<feature type="region of interest" description="Involved in Mg(2+) ion dislocation from EF-Tu" evidence="1">
    <location>
        <begin position="78"/>
        <end position="81"/>
    </location>
</feature>
<evidence type="ECO:0000255" key="1">
    <source>
        <dbReference type="HAMAP-Rule" id="MF_00050"/>
    </source>
</evidence>
<proteinExistence type="inferred from homology"/>
<keyword id="KW-0963">Cytoplasm</keyword>
<keyword id="KW-0251">Elongation factor</keyword>
<keyword id="KW-0648">Protein biosynthesis</keyword>
<sequence length="291" mass="32470">MTKAELVKELRTRTQASMSECIKALDASENDIEKAIIWLRENGAIKAANKLKNAATDGVTLAKKVGNKAILIEVNCQTDFVAKNENFLAYANQILEEALAKVESKEDFDKLIINGKPIAESGLDLTAYIGEKIVFRRGEILKANDQQTLGVYTHNNNRVAAIILVDGKVEDEVVRNVAMHAAAMRPRYLNEQVVDQVWLAKEREIIVNQLEHEGKPAAFAAKIIEGRLNKILKENCLVDQSYFKQPELTIEKYLKNNNAVAVGYYSYEVGEGIEKAPQMSFADEVAAQMKK</sequence>
<accession>B5ZC22</accession>
<reference key="1">
    <citation type="submission" date="2008-10" db="EMBL/GenBank/DDBJ databases">
        <title>Genome sequence of Ureaplasma urealyticum serovar 10 ATCC-33699.</title>
        <authorList>
            <person name="Shrivastava S."/>
            <person name="Methe B.A."/>
            <person name="Glass J."/>
            <person name="White K."/>
            <person name="Duffy L.B."/>
        </authorList>
    </citation>
    <scope>NUCLEOTIDE SEQUENCE [LARGE SCALE GENOMIC DNA]</scope>
    <source>
        <strain>ATCC 33699 / Western</strain>
    </source>
</reference>
<protein>
    <recommendedName>
        <fullName evidence="1">Elongation factor Ts</fullName>
        <shortName evidence="1">EF-Ts</shortName>
    </recommendedName>
</protein>
<name>EFTS_UREU1</name>
<comment type="function">
    <text evidence="1">Associates with the EF-Tu.GDP complex and induces the exchange of GDP to GTP. It remains bound to the aminoacyl-tRNA.EF-Tu.GTP complex up to the GTP hydrolysis stage on the ribosome.</text>
</comment>
<comment type="subcellular location">
    <subcellularLocation>
        <location evidence="1">Cytoplasm</location>
    </subcellularLocation>
</comment>
<comment type="similarity">
    <text evidence="1">Belongs to the EF-Ts family.</text>
</comment>
<gene>
    <name evidence="1" type="primary">tsf</name>
    <name type="ordered locus">UUR10_0597</name>
</gene>